<name>ATPF_STRS2</name>
<organism>
    <name type="scientific">Streptococcus suis (strain 98HAH33)</name>
    <dbReference type="NCBI Taxonomy" id="391296"/>
    <lineage>
        <taxon>Bacteria</taxon>
        <taxon>Bacillati</taxon>
        <taxon>Bacillota</taxon>
        <taxon>Bacilli</taxon>
        <taxon>Lactobacillales</taxon>
        <taxon>Streptococcaceae</taxon>
        <taxon>Streptococcus</taxon>
    </lineage>
</organism>
<dbReference type="EMBL" id="CP000408">
    <property type="protein sequence ID" value="ABP92350.1"/>
    <property type="molecule type" value="Genomic_DNA"/>
</dbReference>
<dbReference type="SMR" id="A4W1W1"/>
<dbReference type="KEGG" id="ssv:SSU98_1192"/>
<dbReference type="HOGENOM" id="CLU_079215_4_2_9"/>
<dbReference type="GO" id="GO:0005886">
    <property type="term" value="C:plasma membrane"/>
    <property type="evidence" value="ECO:0007669"/>
    <property type="project" value="UniProtKB-SubCell"/>
</dbReference>
<dbReference type="GO" id="GO:0045259">
    <property type="term" value="C:proton-transporting ATP synthase complex"/>
    <property type="evidence" value="ECO:0007669"/>
    <property type="project" value="UniProtKB-KW"/>
</dbReference>
<dbReference type="GO" id="GO:0046933">
    <property type="term" value="F:proton-transporting ATP synthase activity, rotational mechanism"/>
    <property type="evidence" value="ECO:0007669"/>
    <property type="project" value="UniProtKB-UniRule"/>
</dbReference>
<dbReference type="GO" id="GO:0046961">
    <property type="term" value="F:proton-transporting ATPase activity, rotational mechanism"/>
    <property type="evidence" value="ECO:0007669"/>
    <property type="project" value="TreeGrafter"/>
</dbReference>
<dbReference type="CDD" id="cd06503">
    <property type="entry name" value="ATP-synt_Fo_b"/>
    <property type="match status" value="1"/>
</dbReference>
<dbReference type="HAMAP" id="MF_01398">
    <property type="entry name" value="ATP_synth_b_bprime"/>
    <property type="match status" value="1"/>
</dbReference>
<dbReference type="InterPro" id="IPR028987">
    <property type="entry name" value="ATP_synth_B-like_membr_sf"/>
</dbReference>
<dbReference type="InterPro" id="IPR002146">
    <property type="entry name" value="ATP_synth_b/b'su_bac/chlpt"/>
</dbReference>
<dbReference type="InterPro" id="IPR005864">
    <property type="entry name" value="ATP_synth_F0_bsu_bac"/>
</dbReference>
<dbReference type="InterPro" id="IPR050059">
    <property type="entry name" value="ATP_synthase_B_chain"/>
</dbReference>
<dbReference type="NCBIfam" id="TIGR01144">
    <property type="entry name" value="ATP_synt_b"/>
    <property type="match status" value="1"/>
</dbReference>
<dbReference type="PANTHER" id="PTHR33445:SF1">
    <property type="entry name" value="ATP SYNTHASE SUBUNIT B"/>
    <property type="match status" value="1"/>
</dbReference>
<dbReference type="PANTHER" id="PTHR33445">
    <property type="entry name" value="ATP SYNTHASE SUBUNIT B', CHLOROPLASTIC"/>
    <property type="match status" value="1"/>
</dbReference>
<dbReference type="Pfam" id="PF00430">
    <property type="entry name" value="ATP-synt_B"/>
    <property type="match status" value="1"/>
</dbReference>
<dbReference type="SUPFAM" id="SSF81573">
    <property type="entry name" value="F1F0 ATP synthase subunit B, membrane domain"/>
    <property type="match status" value="1"/>
</dbReference>
<keyword id="KW-0066">ATP synthesis</keyword>
<keyword id="KW-1003">Cell membrane</keyword>
<keyword id="KW-0138">CF(0)</keyword>
<keyword id="KW-0375">Hydrogen ion transport</keyword>
<keyword id="KW-0406">Ion transport</keyword>
<keyword id="KW-0472">Membrane</keyword>
<keyword id="KW-0812">Transmembrane</keyword>
<keyword id="KW-1133">Transmembrane helix</keyword>
<keyword id="KW-0813">Transport</keyword>
<proteinExistence type="inferred from homology"/>
<feature type="chain" id="PRO_0000368813" description="ATP synthase subunit b">
    <location>
        <begin position="1"/>
        <end position="168"/>
    </location>
</feature>
<feature type="transmembrane region" description="Helical" evidence="1">
    <location>
        <begin position="10"/>
        <end position="30"/>
    </location>
</feature>
<protein>
    <recommendedName>
        <fullName evidence="1">ATP synthase subunit b</fullName>
    </recommendedName>
    <alternativeName>
        <fullName evidence="1">ATP synthase F(0) sector subunit b</fullName>
    </alternativeName>
    <alternativeName>
        <fullName evidence="1">ATPase subunit I</fullName>
    </alternativeName>
    <alternativeName>
        <fullName evidence="1">F-type ATPase subunit b</fullName>
        <shortName evidence="1">F-ATPase subunit b</shortName>
    </alternativeName>
</protein>
<sequence length="168" mass="18911">MATTITMQSSTILGNFILVTASFAVLIILIRVFAWDKITGIFEERANKIANDIDAAEEKLTAAANLVQQREDELVQGRIESQKIIQDAVERAKLEKKRILEQADVEIQGLKQKAQLEIEAEKREAQENLRVQVAELAVDLASKIILEDLDQQAHSNLIDRYLDKLGDK</sequence>
<comment type="function">
    <text evidence="1">F(1)F(0) ATP synthase produces ATP from ADP in the presence of a proton or sodium gradient. F-type ATPases consist of two structural domains, F(1) containing the extramembraneous catalytic core and F(0) containing the membrane proton channel, linked together by a central stalk and a peripheral stalk. During catalysis, ATP synthesis in the catalytic domain of F(1) is coupled via a rotary mechanism of the central stalk subunits to proton translocation.</text>
</comment>
<comment type="function">
    <text evidence="1">Component of the F(0) channel, it forms part of the peripheral stalk, linking F(1) to F(0).</text>
</comment>
<comment type="subunit">
    <text evidence="1">F-type ATPases have 2 components, F(1) - the catalytic core - and F(0) - the membrane proton channel. F(1) has five subunits: alpha(3), beta(3), gamma(1), delta(1), epsilon(1). F(0) has three main subunits: a(1), b(2) and c(10-14). The alpha and beta chains form an alternating ring which encloses part of the gamma chain. F(1) is attached to F(0) by a central stalk formed by the gamma and epsilon chains, while a peripheral stalk is formed by the delta and b chains.</text>
</comment>
<comment type="subcellular location">
    <subcellularLocation>
        <location evidence="1">Cell membrane</location>
        <topology evidence="1">Single-pass membrane protein</topology>
    </subcellularLocation>
</comment>
<comment type="similarity">
    <text evidence="1">Belongs to the ATPase B chain family.</text>
</comment>
<evidence type="ECO:0000255" key="1">
    <source>
        <dbReference type="HAMAP-Rule" id="MF_01398"/>
    </source>
</evidence>
<accession>A4W1W1</accession>
<reference key="1">
    <citation type="journal article" date="2007" name="PLoS ONE">
        <title>A glimpse of streptococcal toxic shock syndrome from comparative genomics of S. suis 2 Chinese isolates.</title>
        <authorList>
            <person name="Chen C."/>
            <person name="Tang J."/>
            <person name="Dong W."/>
            <person name="Wang C."/>
            <person name="Feng Y."/>
            <person name="Wang J."/>
            <person name="Zheng F."/>
            <person name="Pan X."/>
            <person name="Liu D."/>
            <person name="Li M."/>
            <person name="Song Y."/>
            <person name="Zhu X."/>
            <person name="Sun H."/>
            <person name="Feng T."/>
            <person name="Guo Z."/>
            <person name="Ju A."/>
            <person name="Ge J."/>
            <person name="Dong Y."/>
            <person name="Sun W."/>
            <person name="Jiang Y."/>
            <person name="Wang J."/>
            <person name="Yan J."/>
            <person name="Yang H."/>
            <person name="Wang X."/>
            <person name="Gao G.F."/>
            <person name="Yang R."/>
            <person name="Wang J."/>
            <person name="Yu J."/>
        </authorList>
    </citation>
    <scope>NUCLEOTIDE SEQUENCE [LARGE SCALE GENOMIC DNA]</scope>
    <source>
        <strain>98HAH33</strain>
    </source>
</reference>
<gene>
    <name evidence="1" type="primary">atpF</name>
    <name type="ordered locus">SSU98_1192</name>
</gene>